<protein>
    <recommendedName>
        <fullName evidence="1">4-hydroxy-tetrahydrodipicolinate reductase</fullName>
        <shortName evidence="1">HTPA reductase</shortName>
        <ecNumber evidence="1">1.17.1.8</ecNumber>
    </recommendedName>
</protein>
<dbReference type="EC" id="1.17.1.8" evidence="1"/>
<dbReference type="EMBL" id="CP000947">
    <property type="protein sequence ID" value="ACA31037.1"/>
    <property type="molecule type" value="Genomic_DNA"/>
</dbReference>
<dbReference type="RefSeq" id="WP_012340462.1">
    <property type="nucleotide sequence ID" value="NC_010519.1"/>
</dbReference>
<dbReference type="SMR" id="B0UU27"/>
<dbReference type="STRING" id="228400.HSM_1304"/>
<dbReference type="GeneID" id="31487607"/>
<dbReference type="KEGG" id="hsm:HSM_1304"/>
<dbReference type="HOGENOM" id="CLU_047479_2_1_6"/>
<dbReference type="UniPathway" id="UPA00034">
    <property type="reaction ID" value="UER00018"/>
</dbReference>
<dbReference type="GO" id="GO:0005829">
    <property type="term" value="C:cytosol"/>
    <property type="evidence" value="ECO:0007669"/>
    <property type="project" value="TreeGrafter"/>
</dbReference>
<dbReference type="GO" id="GO:0008839">
    <property type="term" value="F:4-hydroxy-tetrahydrodipicolinate reductase"/>
    <property type="evidence" value="ECO:0007669"/>
    <property type="project" value="UniProtKB-EC"/>
</dbReference>
<dbReference type="GO" id="GO:0051287">
    <property type="term" value="F:NAD binding"/>
    <property type="evidence" value="ECO:0007669"/>
    <property type="project" value="UniProtKB-UniRule"/>
</dbReference>
<dbReference type="GO" id="GO:0050661">
    <property type="term" value="F:NADP binding"/>
    <property type="evidence" value="ECO:0007669"/>
    <property type="project" value="UniProtKB-UniRule"/>
</dbReference>
<dbReference type="GO" id="GO:0016726">
    <property type="term" value="F:oxidoreductase activity, acting on CH or CH2 groups, NAD or NADP as acceptor"/>
    <property type="evidence" value="ECO:0007669"/>
    <property type="project" value="UniProtKB-UniRule"/>
</dbReference>
<dbReference type="GO" id="GO:0019877">
    <property type="term" value="P:diaminopimelate biosynthetic process"/>
    <property type="evidence" value="ECO:0007669"/>
    <property type="project" value="UniProtKB-UniRule"/>
</dbReference>
<dbReference type="GO" id="GO:0009089">
    <property type="term" value="P:lysine biosynthetic process via diaminopimelate"/>
    <property type="evidence" value="ECO:0007669"/>
    <property type="project" value="UniProtKB-UniRule"/>
</dbReference>
<dbReference type="CDD" id="cd02274">
    <property type="entry name" value="DHDPR_N"/>
    <property type="match status" value="1"/>
</dbReference>
<dbReference type="FunFam" id="3.30.360.10:FF:000004">
    <property type="entry name" value="4-hydroxy-tetrahydrodipicolinate reductase"/>
    <property type="match status" value="1"/>
</dbReference>
<dbReference type="FunFam" id="3.40.50.720:FF:000048">
    <property type="entry name" value="4-hydroxy-tetrahydrodipicolinate reductase"/>
    <property type="match status" value="1"/>
</dbReference>
<dbReference type="Gene3D" id="3.30.360.10">
    <property type="entry name" value="Dihydrodipicolinate Reductase, domain 2"/>
    <property type="match status" value="1"/>
</dbReference>
<dbReference type="Gene3D" id="3.40.50.720">
    <property type="entry name" value="NAD(P)-binding Rossmann-like Domain"/>
    <property type="match status" value="1"/>
</dbReference>
<dbReference type="HAMAP" id="MF_00102">
    <property type="entry name" value="DapB"/>
    <property type="match status" value="1"/>
</dbReference>
<dbReference type="InterPro" id="IPR022663">
    <property type="entry name" value="DapB_C"/>
</dbReference>
<dbReference type="InterPro" id="IPR000846">
    <property type="entry name" value="DapB_N"/>
</dbReference>
<dbReference type="InterPro" id="IPR022664">
    <property type="entry name" value="DapB_N_CS"/>
</dbReference>
<dbReference type="InterPro" id="IPR023940">
    <property type="entry name" value="DHDPR_bac"/>
</dbReference>
<dbReference type="InterPro" id="IPR036291">
    <property type="entry name" value="NAD(P)-bd_dom_sf"/>
</dbReference>
<dbReference type="NCBIfam" id="TIGR00036">
    <property type="entry name" value="dapB"/>
    <property type="match status" value="1"/>
</dbReference>
<dbReference type="PANTHER" id="PTHR20836:SF0">
    <property type="entry name" value="4-HYDROXY-TETRAHYDRODIPICOLINATE REDUCTASE 1, CHLOROPLASTIC-RELATED"/>
    <property type="match status" value="1"/>
</dbReference>
<dbReference type="PANTHER" id="PTHR20836">
    <property type="entry name" value="DIHYDRODIPICOLINATE REDUCTASE"/>
    <property type="match status" value="1"/>
</dbReference>
<dbReference type="Pfam" id="PF05173">
    <property type="entry name" value="DapB_C"/>
    <property type="match status" value="1"/>
</dbReference>
<dbReference type="Pfam" id="PF01113">
    <property type="entry name" value="DapB_N"/>
    <property type="match status" value="1"/>
</dbReference>
<dbReference type="PIRSF" id="PIRSF000161">
    <property type="entry name" value="DHPR"/>
    <property type="match status" value="1"/>
</dbReference>
<dbReference type="SUPFAM" id="SSF55347">
    <property type="entry name" value="Glyceraldehyde-3-phosphate dehydrogenase-like, C-terminal domain"/>
    <property type="match status" value="1"/>
</dbReference>
<dbReference type="SUPFAM" id="SSF51735">
    <property type="entry name" value="NAD(P)-binding Rossmann-fold domains"/>
    <property type="match status" value="1"/>
</dbReference>
<dbReference type="PROSITE" id="PS01298">
    <property type="entry name" value="DAPB"/>
    <property type="match status" value="1"/>
</dbReference>
<name>DAPB_HISS2</name>
<reference key="1">
    <citation type="submission" date="2008-02" db="EMBL/GenBank/DDBJ databases">
        <title>Complete sequence of Haemophilus somnus 2336.</title>
        <authorList>
            <consortium name="US DOE Joint Genome Institute"/>
            <person name="Siddaramappa S."/>
            <person name="Duncan A.J."/>
            <person name="Challacombe J.F."/>
            <person name="Rainey D."/>
            <person name="Gillaspy A.F."/>
            <person name="Carson M."/>
            <person name="Gipson J."/>
            <person name="Gipson M."/>
            <person name="Bruce D."/>
            <person name="Detter J.C."/>
            <person name="Han C.S."/>
            <person name="Land M."/>
            <person name="Tapia R."/>
            <person name="Thompson L.S."/>
            <person name="Orvis J."/>
            <person name="Zaitshik J."/>
            <person name="Barnes G."/>
            <person name="Brettin T.S."/>
            <person name="Dyer D.W."/>
            <person name="Inzana T.J."/>
        </authorList>
    </citation>
    <scope>NUCLEOTIDE SEQUENCE [LARGE SCALE GENOMIC DNA]</scope>
    <source>
        <strain>2336</strain>
    </source>
</reference>
<keyword id="KW-0028">Amino-acid biosynthesis</keyword>
<keyword id="KW-0963">Cytoplasm</keyword>
<keyword id="KW-0220">Diaminopimelate biosynthesis</keyword>
<keyword id="KW-0457">Lysine biosynthesis</keyword>
<keyword id="KW-0520">NAD</keyword>
<keyword id="KW-0521">NADP</keyword>
<keyword id="KW-0560">Oxidoreductase</keyword>
<proteinExistence type="inferred from homology"/>
<organism>
    <name type="scientific">Histophilus somni (strain 2336)</name>
    <name type="common">Haemophilus somnus</name>
    <dbReference type="NCBI Taxonomy" id="228400"/>
    <lineage>
        <taxon>Bacteria</taxon>
        <taxon>Pseudomonadati</taxon>
        <taxon>Pseudomonadota</taxon>
        <taxon>Gammaproteobacteria</taxon>
        <taxon>Pasteurellales</taxon>
        <taxon>Pasteurellaceae</taxon>
        <taxon>Histophilus</taxon>
    </lineage>
</organism>
<sequence length="270" mass="29219">MTLKIGIVGSGGRMGRQLIQAVYHTEGVELGAAFERVGSSLVGTDAGELAGIGRIGIKVTDNLTQEKGNFDILIDFTRPEGTIQHLAFCVEQHKNIVIGTTGFDDQSKQAIQQAAQNIAIVFASNYSVGVNLVFKLLEKAAKVMGDYCDIEIIEAHHRHKVDAPSGTALSMGEHIAKTLGRDLKTHGVFSREGITGERKPDEIGFSTIRAADVVGEHTVWFADIGERVEISHKASSRMTFANGAVRAAKWLSTKQEGLFDMTDVLDLNNL</sequence>
<feature type="chain" id="PRO_1000075681" description="4-hydroxy-tetrahydrodipicolinate reductase">
    <location>
        <begin position="1"/>
        <end position="270"/>
    </location>
</feature>
<feature type="active site" description="Proton donor/acceptor" evidence="1">
    <location>
        <position position="156"/>
    </location>
</feature>
<feature type="active site" description="Proton donor" evidence="1">
    <location>
        <position position="160"/>
    </location>
</feature>
<feature type="binding site" evidence="1">
    <location>
        <begin position="9"/>
        <end position="14"/>
    </location>
    <ligand>
        <name>NAD(+)</name>
        <dbReference type="ChEBI" id="CHEBI:57540"/>
    </ligand>
</feature>
<feature type="binding site" evidence="1">
    <location>
        <position position="35"/>
    </location>
    <ligand>
        <name>NAD(+)</name>
        <dbReference type="ChEBI" id="CHEBI:57540"/>
    </ligand>
</feature>
<feature type="binding site" evidence="1">
    <location>
        <position position="36"/>
    </location>
    <ligand>
        <name>NADP(+)</name>
        <dbReference type="ChEBI" id="CHEBI:58349"/>
    </ligand>
</feature>
<feature type="binding site" evidence="1">
    <location>
        <begin position="99"/>
        <end position="101"/>
    </location>
    <ligand>
        <name>NAD(+)</name>
        <dbReference type="ChEBI" id="CHEBI:57540"/>
    </ligand>
</feature>
<feature type="binding site" evidence="1">
    <location>
        <begin position="123"/>
        <end position="126"/>
    </location>
    <ligand>
        <name>NAD(+)</name>
        <dbReference type="ChEBI" id="CHEBI:57540"/>
    </ligand>
</feature>
<feature type="binding site" evidence="1">
    <location>
        <position position="157"/>
    </location>
    <ligand>
        <name>(S)-2,3,4,5-tetrahydrodipicolinate</name>
        <dbReference type="ChEBI" id="CHEBI:16845"/>
    </ligand>
</feature>
<feature type="binding site" evidence="1">
    <location>
        <begin position="166"/>
        <end position="167"/>
    </location>
    <ligand>
        <name>(S)-2,3,4,5-tetrahydrodipicolinate</name>
        <dbReference type="ChEBI" id="CHEBI:16845"/>
    </ligand>
</feature>
<evidence type="ECO:0000255" key="1">
    <source>
        <dbReference type="HAMAP-Rule" id="MF_00102"/>
    </source>
</evidence>
<evidence type="ECO:0000305" key="2"/>
<accession>B0UU27</accession>
<gene>
    <name evidence="1" type="primary">dapB</name>
    <name type="ordered locus">HSM_1304</name>
</gene>
<comment type="function">
    <text evidence="1">Catalyzes the conversion of 4-hydroxy-tetrahydrodipicolinate (HTPA) to tetrahydrodipicolinate.</text>
</comment>
<comment type="catalytic activity">
    <reaction evidence="1">
        <text>(S)-2,3,4,5-tetrahydrodipicolinate + NAD(+) + H2O = (2S,4S)-4-hydroxy-2,3,4,5-tetrahydrodipicolinate + NADH + H(+)</text>
        <dbReference type="Rhea" id="RHEA:35323"/>
        <dbReference type="ChEBI" id="CHEBI:15377"/>
        <dbReference type="ChEBI" id="CHEBI:15378"/>
        <dbReference type="ChEBI" id="CHEBI:16845"/>
        <dbReference type="ChEBI" id="CHEBI:57540"/>
        <dbReference type="ChEBI" id="CHEBI:57945"/>
        <dbReference type="ChEBI" id="CHEBI:67139"/>
        <dbReference type="EC" id="1.17.1.8"/>
    </reaction>
</comment>
<comment type="catalytic activity">
    <reaction evidence="1">
        <text>(S)-2,3,4,5-tetrahydrodipicolinate + NADP(+) + H2O = (2S,4S)-4-hydroxy-2,3,4,5-tetrahydrodipicolinate + NADPH + H(+)</text>
        <dbReference type="Rhea" id="RHEA:35331"/>
        <dbReference type="ChEBI" id="CHEBI:15377"/>
        <dbReference type="ChEBI" id="CHEBI:15378"/>
        <dbReference type="ChEBI" id="CHEBI:16845"/>
        <dbReference type="ChEBI" id="CHEBI:57783"/>
        <dbReference type="ChEBI" id="CHEBI:58349"/>
        <dbReference type="ChEBI" id="CHEBI:67139"/>
        <dbReference type="EC" id="1.17.1.8"/>
    </reaction>
</comment>
<comment type="pathway">
    <text evidence="1">Amino-acid biosynthesis; L-lysine biosynthesis via DAP pathway; (S)-tetrahydrodipicolinate from L-aspartate: step 4/4.</text>
</comment>
<comment type="subcellular location">
    <subcellularLocation>
        <location evidence="1">Cytoplasm</location>
    </subcellularLocation>
</comment>
<comment type="similarity">
    <text evidence="1">Belongs to the DapB family.</text>
</comment>
<comment type="caution">
    <text evidence="2">Was originally thought to be a dihydrodipicolinate reductase (DHDPR), catalyzing the conversion of dihydrodipicolinate to tetrahydrodipicolinate. However, it was shown in E.coli that the substrate of the enzymatic reaction is not dihydrodipicolinate (DHDP) but in fact (2S,4S)-4-hydroxy-2,3,4,5-tetrahydrodipicolinic acid (HTPA), the product released by the DapA-catalyzed reaction.</text>
</comment>